<keyword id="KW-0002">3D-structure</keyword>
<keyword id="KW-0040">ANK repeat</keyword>
<keyword id="KW-1035">Host cytoplasm</keyword>
<keyword id="KW-0456">Lyase</keyword>
<keyword id="KW-0520">NAD</keyword>
<keyword id="KW-0614">Plasmid</keyword>
<keyword id="KW-1185">Reference proteome</keyword>
<keyword id="KW-0677">Repeat</keyword>
<keyword id="KW-0964">Secreted</keyword>
<keyword id="KW-0800">Toxin</keyword>
<keyword id="KW-0843">Virulence</keyword>
<evidence type="ECO:0000250" key="1">
    <source>
        <dbReference type="UniProtKB" id="Q7NWF2"/>
    </source>
</evidence>
<evidence type="ECO:0000255" key="2"/>
<evidence type="ECO:0000269" key="3">
    <source>
    </source>
</evidence>
<evidence type="ECO:0000269" key="4">
    <source>
    </source>
</evidence>
<evidence type="ECO:0000269" key="5">
    <source>
    </source>
</evidence>
<evidence type="ECO:0000269" key="6">
    <source>
    </source>
</evidence>
<evidence type="ECO:0000269" key="7">
    <source>
    </source>
</evidence>
<evidence type="ECO:0000269" key="8">
    <source>
    </source>
</evidence>
<evidence type="ECO:0000269" key="9">
    <source>
    </source>
</evidence>
<evidence type="ECO:0000303" key="10">
    <source>
    </source>
</evidence>
<evidence type="ECO:0000305" key="11"/>
<evidence type="ECO:0000305" key="12">
    <source>
    </source>
</evidence>
<evidence type="ECO:0000305" key="13">
    <source>
    </source>
</evidence>
<evidence type="ECO:0000312" key="14">
    <source>
        <dbReference type="EMBL" id="AAL72321.1"/>
    </source>
</evidence>
<evidence type="ECO:0000312" key="15">
    <source>
        <dbReference type="Proteomes" id="UP000001006"/>
    </source>
</evidence>
<evidence type="ECO:0007744" key="16">
    <source>
        <dbReference type="PDB" id="7WR1"/>
    </source>
</evidence>
<evidence type="ECO:0007744" key="17">
    <source>
        <dbReference type="PDB" id="7WR2"/>
    </source>
</evidence>
<evidence type="ECO:0007744" key="18">
    <source>
        <dbReference type="PDB" id="7WR3"/>
    </source>
</evidence>
<evidence type="ECO:0007744" key="19">
    <source>
        <dbReference type="PDB" id="7WR4"/>
    </source>
</evidence>
<evidence type="ECO:0007744" key="20">
    <source>
        <dbReference type="PDB" id="7WR5"/>
    </source>
</evidence>
<evidence type="ECO:0007744" key="21">
    <source>
        <dbReference type="PDB" id="8J6K"/>
    </source>
</evidence>
<evidence type="ECO:0007829" key="22">
    <source>
        <dbReference type="PDB" id="7WR2"/>
    </source>
</evidence>
<evidence type="ECO:0007829" key="23">
    <source>
        <dbReference type="PDB" id="7WR3"/>
    </source>
</evidence>
<evidence type="ECO:0007829" key="24">
    <source>
        <dbReference type="PDB" id="7WR4"/>
    </source>
</evidence>
<evidence type="ECO:0007829" key="25">
    <source>
        <dbReference type="PDB" id="7WR5"/>
    </source>
</evidence>
<protein>
    <recommendedName>
        <fullName evidence="11">Arginine ADP-riboxanase OspC3</fullName>
        <ecNumber evidence="5 6 7 8">4.3.99.-</ecNumber>
    </recommendedName>
</protein>
<dbReference type="EC" id="4.3.99.-" evidence="5 6 7 8"/>
<dbReference type="EMBL" id="AB819724">
    <property type="protein sequence ID" value="BAN28452.1"/>
    <property type="molecule type" value="Genomic_DNA"/>
</dbReference>
<dbReference type="EMBL" id="AF386526">
    <property type="protein sequence ID" value="AAL72321.1"/>
    <property type="molecule type" value="Genomic_DNA"/>
</dbReference>
<dbReference type="RefSeq" id="NP_858248.1">
    <property type="nucleotide sequence ID" value="NC_004851.1"/>
</dbReference>
<dbReference type="PDB" id="7WR1">
    <property type="method" value="X-ray"/>
    <property type="resolution" value="2.13 A"/>
    <property type="chains" value="C/D=332-484"/>
</dbReference>
<dbReference type="PDB" id="7WR2">
    <property type="method" value="X-ray"/>
    <property type="resolution" value="1.54 A"/>
    <property type="chains" value="A=332-484"/>
</dbReference>
<dbReference type="PDB" id="7WR3">
    <property type="method" value="X-ray"/>
    <property type="resolution" value="1.87 A"/>
    <property type="chains" value="A/B=52-484"/>
</dbReference>
<dbReference type="PDB" id="7WR4">
    <property type="method" value="X-ray"/>
    <property type="resolution" value="2.75 A"/>
    <property type="chains" value="A=53-474"/>
</dbReference>
<dbReference type="PDB" id="7WR5">
    <property type="method" value="X-ray"/>
    <property type="resolution" value="3.10 A"/>
    <property type="chains" value="A=53-474"/>
</dbReference>
<dbReference type="PDB" id="8J6K">
    <property type="method" value="X-ray"/>
    <property type="resolution" value="3.12 A"/>
    <property type="chains" value="C=332-484"/>
</dbReference>
<dbReference type="PDBsum" id="7WR1"/>
<dbReference type="PDBsum" id="7WR2"/>
<dbReference type="PDBsum" id="7WR3"/>
<dbReference type="PDBsum" id="7WR4"/>
<dbReference type="PDBsum" id="7WR5"/>
<dbReference type="PDBsum" id="8J6K"/>
<dbReference type="SMR" id="A0A0H2US87"/>
<dbReference type="PaxDb" id="198214-CP0115"/>
<dbReference type="GeneID" id="1238024"/>
<dbReference type="KEGG" id="sfl:CP0115"/>
<dbReference type="PATRIC" id="fig|198214.7.peg.5367"/>
<dbReference type="HOGENOM" id="CLU_053336_0_0_6"/>
<dbReference type="Proteomes" id="UP000001006">
    <property type="component" value="Plasmid pCP301"/>
</dbReference>
<dbReference type="GO" id="GO:0005576">
    <property type="term" value="C:extracellular region"/>
    <property type="evidence" value="ECO:0007669"/>
    <property type="project" value="UniProtKB-SubCell"/>
</dbReference>
<dbReference type="GO" id="GO:0030430">
    <property type="term" value="C:host cell cytoplasm"/>
    <property type="evidence" value="ECO:0000314"/>
    <property type="project" value="UniProt"/>
</dbReference>
<dbReference type="GO" id="GO:0140740">
    <property type="term" value="F:ADP-riboxanase activity"/>
    <property type="evidence" value="ECO:0000314"/>
    <property type="project" value="UniProtKB"/>
</dbReference>
<dbReference type="GO" id="GO:0005516">
    <property type="term" value="F:calmodulin binding"/>
    <property type="evidence" value="ECO:0000314"/>
    <property type="project" value="UniProtKB"/>
</dbReference>
<dbReference type="GO" id="GO:0090729">
    <property type="term" value="F:toxin activity"/>
    <property type="evidence" value="ECO:0007669"/>
    <property type="project" value="UniProtKB-KW"/>
</dbReference>
<dbReference type="GO" id="GO:0052040">
    <property type="term" value="P:symbiont-mediated perturbation of host programmed cell death"/>
    <property type="evidence" value="ECO:0000314"/>
    <property type="project" value="UniProt"/>
</dbReference>
<dbReference type="GO" id="GO:0075135">
    <property type="term" value="P:symbiont-mediated suppression of host calcium-mediated signal transduction"/>
    <property type="evidence" value="ECO:0000314"/>
    <property type="project" value="UniProtKB"/>
</dbReference>
<dbReference type="GO" id="GO:0052041">
    <property type="term" value="P:symbiont-mediated suppression of host programmed cell death"/>
    <property type="evidence" value="ECO:0000314"/>
    <property type="project" value="UniProtKB"/>
</dbReference>
<dbReference type="GO" id="GO:0052029">
    <property type="term" value="P:symbiont-mediated suppression of host signal transduction pathway"/>
    <property type="evidence" value="ECO:0000314"/>
    <property type="project" value="UniProtKB"/>
</dbReference>
<dbReference type="InterPro" id="IPR010366">
    <property type="entry name" value="OspC1-4"/>
</dbReference>
<dbReference type="Pfam" id="PF06128">
    <property type="entry name" value="Shigella_OspC"/>
    <property type="match status" value="1"/>
</dbReference>
<comment type="function">
    <text evidence="3 4 5 6 7 8 9">ADP-riboxanase effector that inhibits host cell pyroptosis (PubMed:23684308, PubMed:34409271, PubMed:34671164, PubMed:36624349). Acts by mediating arginine ADP-riboxanation of host CASP4/CASP11, blocking CASP4/CASP11 autoprocessing (PubMed:34671164, PubMed:35338844, PubMed:35568036, PubMed:36624349, PubMed:37014865). This prevents CASP4 activation and ability to recognize and cleave GSDMD, thereby inhibiting LPS-induced pyroptosis (PubMed:34671164, PubMed:36624349). ADP-riboxanation takes place in two steps: OspC3 first catalyzes ADP-ribosylation of target Arg, and then initiates a deamination to remove one N-omega group (PubMed:34671164). Independently of its ADP-riboxanase activity, acts as an inhibitor of calcium signaling by inhibiting host calmodulin, preventing activation of the JAK-STAT signaling pathway in response to interferon-beta (PubMed:35568036). Mechanistically, acts by binding to the apo form of calmodulin, preventing calcium-binding and ability to activate host CaMK2 (CAMKII), which is required to stimulate the JAK-STAT signaling pathway in response to interferon-beta (PubMed:35568036).</text>
</comment>
<comment type="catalytic activity">
    <reaction evidence="5 6 7 8">
        <text>L-arginyl-[protein] + NAD(+) = ADP-riboxanated L-argininyl-[protein] + nicotinamide + NH4(+) + H(+)</text>
        <dbReference type="Rhea" id="RHEA:69500"/>
        <dbReference type="Rhea" id="RHEA-COMP:10532"/>
        <dbReference type="Rhea" id="RHEA-COMP:17719"/>
        <dbReference type="ChEBI" id="CHEBI:15378"/>
        <dbReference type="ChEBI" id="CHEBI:17154"/>
        <dbReference type="ChEBI" id="CHEBI:28938"/>
        <dbReference type="ChEBI" id="CHEBI:29965"/>
        <dbReference type="ChEBI" id="CHEBI:57540"/>
        <dbReference type="ChEBI" id="CHEBI:184300"/>
    </reaction>
    <physiologicalReaction direction="left-to-right" evidence="5 6 7 8">
        <dbReference type="Rhea" id="RHEA:69501"/>
    </physiologicalReaction>
</comment>
<comment type="activity regulation">
    <text evidence="8">Interaction with host calmodulin (CALM1, CALM2 and/or CALM3) is required to mediate arginine ADP-riboxanation of host caspases.</text>
</comment>
<comment type="subunit">
    <text evidence="7 8">Interacts with host calmodulin (CALM1, CALM2 and/or CALM3); specifically interacts with the apo form of calmodulin, preventing calcium-binding.</text>
</comment>
<comment type="subcellular location">
    <subcellularLocation>
        <location evidence="3">Secreted</location>
    </subcellularLocation>
    <subcellularLocation>
        <location evidence="12">Host cytoplasm</location>
    </subcellularLocation>
    <text evidence="3">Secreted via the type III secretion system (T3SS).</text>
</comment>
<comment type="disruption phenotype">
    <text evidence="3">Host cells display increased pyroptosis.</text>
</comment>
<comment type="similarity">
    <text evidence="11">Belongs to the OspC family.</text>
</comment>
<accession>A0A0H2US87</accession>
<accession>R4X5L7</accession>
<sequence length="484" mass="55651">MKIPEAVNHINVQNNIDLVDGKINPNKDTKALQKNISCVTNSSSSGISEKHLDHCADTVKSFLRKSIAAQSYSKMFSQGTSFKSLNLSIEAPSGARSSFRSLEHLDKVSRHYLSEIIQKTHPLSSDERHLLSIIINSDFNFRHQSNANLSNNTLNIKSFDKIKSENIQTYKNTFSEDIEEIANHDFVFFGVEISNHQETLPLNKTHHTVDFGANAYIIDHDSPYGYMTLTDHFDNAIPPVFYHEHQSFFLDNFKEVVDEVSRYVHGNQGKTDVPIFNTKDMRLGIGLHLIDFIRKSKDQRFREFCYNKNIDPVSLDRIINFVFQLEYHIPRMLSTDNFKKIKLRDISLEDAIKASNYEEINNKVTDKKMAHQALAYSLGNKKADIALYLLSKFNFTKQDVAEMEKMKNNRYCNLYDVEYLLSKDGANYKVLEYFINNGLVDVNKKFQKVNSGDTMLDNAMKSKDSKMIDFLLKNGAILGKRFEI</sequence>
<name>OSPC3_SHIFL</name>
<reference key="1">
    <citation type="journal article" date="2013" name="Cell Host Microbe">
        <title>The Shigella OspC3 effector inhibits caspase-4, antagonizes inflammatory cell death, and promotes epithelial infection.</title>
        <authorList>
            <person name="Kobayashi T."/>
            <person name="Ogawa M."/>
            <person name="Sanada T."/>
            <person name="Mimuro H."/>
            <person name="Kim M."/>
            <person name="Ashida H."/>
            <person name="Akakura R."/>
            <person name="Yoshida M."/>
            <person name="Kawalec M."/>
            <person name="Reichhart J.M."/>
            <person name="Mizushima T."/>
            <person name="Sasakawa C."/>
        </authorList>
    </citation>
    <scope>NUCLEOTIDE SEQUENCE [GENOMIC DNA]</scope>
    <scope>FUNCTION</scope>
    <scope>SUBCELLULAR LOCATION</scope>
    <scope>DISRUPTION PHENOTYPE</scope>
    <scope>MUTAGENESIS OF 333-LEU--ASN-337; 456-LEU--ALA-459 AND LEU-471</scope>
    <source>
        <strain>YSH6000 / Serotype 2a</strain>
        <plasmid>pMYSH6000</plasmid>
    </source>
</reference>
<reference key="2">
    <citation type="journal article" date="2002" name="Nucleic Acids Res.">
        <title>Genome sequence of Shigella flexneri 2a: insights into pathogenicity through comparison with genomes of Escherichia coli K12 and O157.</title>
        <authorList>
            <person name="Jin Q."/>
            <person name="Yuan Z."/>
            <person name="Xu J."/>
            <person name="Wang Y."/>
            <person name="Shen Y."/>
            <person name="Lu W."/>
            <person name="Wang J."/>
            <person name="Liu H."/>
            <person name="Yang J."/>
            <person name="Yang F."/>
            <person name="Zhang X."/>
            <person name="Zhang J."/>
            <person name="Yang G."/>
            <person name="Wu H."/>
            <person name="Qu D."/>
            <person name="Dong J."/>
            <person name="Sun L."/>
            <person name="Xue Y."/>
            <person name="Zhao A."/>
            <person name="Gao Y."/>
            <person name="Zhu J."/>
            <person name="Kan B."/>
            <person name="Ding K."/>
            <person name="Chen S."/>
            <person name="Cheng H."/>
            <person name="Yao Z."/>
            <person name="He B."/>
            <person name="Chen R."/>
            <person name="Ma D."/>
            <person name="Qiang B."/>
            <person name="Wen Y."/>
            <person name="Hou Y."/>
            <person name="Yu J."/>
        </authorList>
    </citation>
    <scope>NUCLEOTIDE SEQUENCE [LARGE SCALE GENOMIC DNA]</scope>
    <source>
        <strain evidence="15">301 / Serotype 2a</strain>
    </source>
</reference>
<reference key="3">
    <citation type="journal article" date="2021" name="IScience">
        <title>Shigella OspC3 suppresses murine cytosolic LPS sensing.</title>
        <authorList>
            <person name="Oh C."/>
            <person name="Verma A."/>
            <person name="Hafeez M."/>
            <person name="Hogland B."/>
            <person name="Aachoui Y."/>
        </authorList>
    </citation>
    <scope>FUNCTION</scope>
    <scope>SUBCELLULAR LOCATION</scope>
</reference>
<reference key="4">
    <citation type="journal article" date="2021" name="Nature">
        <title>Shigella evades pyroptosis by arginine ADP-riboxanation of caspase-11.</title>
        <authorList>
            <person name="Li Z."/>
            <person name="Liu W."/>
            <person name="Fu J."/>
            <person name="Cheng S."/>
            <person name="Xu Y."/>
            <person name="Wang Z."/>
            <person name="Liu X."/>
            <person name="Shi X."/>
            <person name="Liu Y."/>
            <person name="Qi X."/>
            <person name="Liu X."/>
            <person name="Ding J."/>
            <person name="Shao F."/>
        </authorList>
    </citation>
    <scope>FUNCTION</scope>
    <scope>CATALYTIC ACTIVITY</scope>
    <scope>MUTAGENESIS OF PHE-141; ASP-177; PHE-186; GLU-192; GLU-326 AND HIS-328</scope>
    <source>
        <strain>ATCC 700930 / 2457T / Serotype 2a</strain>
    </source>
</reference>
<reference key="5">
    <citation type="journal article" date="2022" name="Cell">
        <title>A family of conserved bacterial virulence factors dampens interferon responses by blocking calcium signaling.</title>
        <authorList>
            <person name="Alphonse N."/>
            <person name="Wanford J.J."/>
            <person name="Voak A.A."/>
            <person name="Gay J."/>
            <person name="Venkhaya S."/>
            <person name="Burroughs O."/>
            <person name="Mathew S."/>
            <person name="Lee T."/>
            <person name="Evans S.L."/>
            <person name="Zhao W."/>
            <person name="Frowde K."/>
            <person name="Alrehaili A."/>
            <person name="Dickenson R.E."/>
            <person name="Munk M."/>
            <person name="Panina S."/>
            <person name="Mahmood I.F."/>
            <person name="Llorian M."/>
            <person name="Stanifer M.L."/>
            <person name="Boulant S."/>
            <person name="Berchtold M.W."/>
            <person name="Bergeron J.R.C."/>
            <person name="Wack A."/>
            <person name="Lesser C.F."/>
            <person name="Odendall C."/>
        </authorList>
    </citation>
    <scope>FUNCTION</scope>
    <scope>CATALYTIC ACTIVITY</scope>
    <scope>INTERACTION WITH HOST CALMODULIN</scope>
    <scope>MUTAGENESIS OF 326-GLU--HIS-328</scope>
</reference>
<reference key="6">
    <citation type="journal article" date="2022" name="Mol. Cell">
        <title>Pathogen hijacks programmed cell death signaling by arginine ADPR-deacylization of caspases.</title>
        <authorList>
            <person name="Peng T."/>
            <person name="Tao X."/>
            <person name="Xia Z."/>
            <person name="Hu S."/>
            <person name="Xue J."/>
            <person name="Zhu Q."/>
            <person name="Pan X."/>
            <person name="Zhang Q."/>
            <person name="Li S."/>
        </authorList>
    </citation>
    <scope>FUNCTION</scope>
    <scope>CATALYTIC ACTIVITY</scope>
</reference>
<reference key="7">
    <citation type="journal article" date="2023" name="Proc. Natl. Acad. Sci. U.S.A.">
        <title>Shigella IpaH9.8 limits GBP1-dependent LPS release from intracytosolic bacteria to suppress caspase-4 activation.</title>
        <authorList>
            <person name="Goers L."/>
            <person name="Kim K."/>
            <person name="Stedman T.C."/>
            <person name="Canning P.J."/>
            <person name="Mou X."/>
            <person name="Ernst N.H."/>
            <person name="Coers J."/>
            <person name="Lesser C.F."/>
        </authorList>
    </citation>
    <scope>FUNCTION</scope>
</reference>
<reference evidence="16 17 18 19 20" key="8">
    <citation type="journal article" date="2023" name="Nat. Struct. Mol. Biol.">
        <title>Structural mechanisms of calmodulin activation of Shigella effector OspC3 to ADP-riboxanate caspase-4/11 and block pyroptosis.</title>
        <authorList>
            <person name="Hou Y."/>
            <person name="Zeng H."/>
            <person name="Li Z."/>
            <person name="Feng N."/>
            <person name="Meng F."/>
            <person name="Xu Y."/>
            <person name="Li L."/>
            <person name="Shao F."/>
            <person name="Ding J."/>
        </authorList>
    </citation>
    <scope>X-RAY CRYSTALLOGRAPHY (1.54 ANGSTROMS) OF 332-484 IN COMPLEX WITH HOST CALMODULIN; HOST CASP4 AND NAD ANALOG</scope>
    <scope>FUNCTION</scope>
    <scope>CATALYTIC ACTIVITY</scope>
    <scope>ACTIVITY REGULATION</scope>
    <scope>ACTIVE SITE</scope>
    <scope>MUTAGENESIS OF 59-VAL--LEU-63; ARG-96; ILE-117; LEU-131; ILE-135; HIS-143; 169-THR--ASN-172; ASP-177; PHE-188; PHE-211; ASP-231; LEU-283; GLU-326; ARG-331; GLU-349; ARG-410; LEU-414; VAL-449; ASN-450 AND LYS-461</scope>
</reference>
<reference evidence="21" key="9">
    <citation type="journal article" date="2023" name="Nature">
        <title>Recognition and maturation of IL-18 by caspase-4 noncanonical inflammasome.</title>
        <authorList>
            <person name="Shi X."/>
            <person name="Sun Q."/>
            <person name="Hou Y."/>
            <person name="Zeng H."/>
            <person name="Cao Y."/>
            <person name="Dong M."/>
            <person name="Ding J."/>
            <person name="Shao F."/>
        </authorList>
    </citation>
    <scope>X-RAY CRYSTALLOGRAPHY (3.12 ANGSTROMS) OF 332-484 IN COMPLEX WITH CASP4 AND IL18</scope>
</reference>
<geneLocation type="plasmid">
    <name>pCP301</name>
</geneLocation>
<geneLocation type="plasmid">
    <name>pMYSH6000</name>
</geneLocation>
<gene>
    <name evidence="10" type="primary">ospC3</name>
    <name evidence="14" type="ordered locus">CP0115</name>
    <name evidence="14" type="ORF">SF_p0115</name>
</gene>
<feature type="chain" id="PRO_0000455086" description="Arginine ADP-riboxanase OspC3">
    <location>
        <begin position="1"/>
        <end position="484"/>
    </location>
</feature>
<feature type="repeat" description="ANK 1" evidence="2">
    <location>
        <begin position="369"/>
        <end position="398"/>
    </location>
</feature>
<feature type="repeat" description="ANK 2" evidence="2">
    <location>
        <begin position="413"/>
        <end position="444"/>
    </location>
</feature>
<feature type="repeat" description="ANK 3" evidence="2">
    <location>
        <begin position="451"/>
        <end position="480"/>
    </location>
</feature>
<feature type="active site" evidence="8">
    <location>
        <position position="326"/>
    </location>
</feature>
<feature type="binding site" evidence="13 20">
    <location>
        <position position="143"/>
    </location>
    <ligand>
        <name>NAD(+)</name>
        <dbReference type="ChEBI" id="CHEBI:57540"/>
    </ligand>
</feature>
<feature type="binding site" evidence="13 20">
    <location>
        <position position="144"/>
    </location>
    <ligand>
        <name>NAD(+)</name>
        <dbReference type="ChEBI" id="CHEBI:57540"/>
    </ligand>
</feature>
<feature type="binding site" evidence="13 20">
    <location>
        <position position="145"/>
    </location>
    <ligand>
        <name>NAD(+)</name>
        <dbReference type="ChEBI" id="CHEBI:57540"/>
    </ligand>
</feature>
<feature type="binding site" evidence="13 20">
    <location>
        <position position="155"/>
    </location>
    <ligand>
        <name>NAD(+)</name>
        <dbReference type="ChEBI" id="CHEBI:57540"/>
    </ligand>
</feature>
<feature type="binding site" evidence="13 20">
    <location>
        <position position="157"/>
    </location>
    <ligand>
        <name>NAD(+)</name>
        <dbReference type="ChEBI" id="CHEBI:57540"/>
    </ligand>
</feature>
<feature type="binding site" evidence="13 20">
    <location>
        <position position="169"/>
    </location>
    <ligand>
        <name>NAD(+)</name>
        <dbReference type="ChEBI" id="CHEBI:57540"/>
    </ligand>
</feature>
<feature type="binding site" evidence="13 20">
    <location>
        <position position="172"/>
    </location>
    <ligand>
        <name>NAD(+)</name>
        <dbReference type="ChEBI" id="CHEBI:57540"/>
    </ligand>
</feature>
<feature type="binding site" evidence="13 20">
    <location>
        <position position="173"/>
    </location>
    <ligand>
        <name>NAD(+)</name>
        <dbReference type="ChEBI" id="CHEBI:57540"/>
    </ligand>
</feature>
<feature type="site" description="Important for catalytic activity" evidence="1">
    <location>
        <position position="143"/>
    </location>
</feature>
<feature type="site" description="Important for catalytic activity" evidence="1">
    <location>
        <position position="188"/>
    </location>
</feature>
<feature type="site" description="Important for catalytic activity" evidence="1">
    <location>
        <position position="211"/>
    </location>
</feature>
<feature type="site" description="Important for catalytic activity" evidence="1">
    <location>
        <position position="231"/>
    </location>
</feature>
<feature type="mutagenesis site" description="Decreased interaction with host calmodulin." evidence="8">
    <original>VKSFL</original>
    <variation>DKSDD</variation>
    <location>
        <begin position="59"/>
        <end position="63"/>
    </location>
</feature>
<feature type="mutagenesis site" description="Abolished interaction with host calmodulin; when associated with A-331." evidence="8">
    <original>R</original>
    <variation>A</variation>
    <location>
        <position position="96"/>
    </location>
</feature>
<feature type="mutagenesis site" description="Abolished interaction with host calmodulin; when associated with A-131, A-135 and A-283." evidence="8">
    <original>I</original>
    <variation>A</variation>
    <location>
        <position position="117"/>
    </location>
</feature>
<feature type="mutagenesis site" description="Abolished interaction with host calmodulin; when associated with A-117, A-135 and A-283." evidence="8">
    <original>L</original>
    <variation>A</variation>
    <location>
        <position position="131"/>
    </location>
</feature>
<feature type="mutagenesis site" description="Abolished interaction with host calmodulin; when associated with A-117, A-131 and A-283." evidence="8">
    <original>I</original>
    <variation>A</variation>
    <location>
        <position position="135"/>
    </location>
</feature>
<feature type="mutagenesis site" description="Abolished arginine ADP-riboxanation of host CASP4/CASP11." evidence="5">
    <original>F</original>
    <variation>A</variation>
    <location>
        <position position="141"/>
    </location>
</feature>
<feature type="mutagenesis site" description="Strongly decreased arginine ADP-riboxanase activity." evidence="8">
    <original>H</original>
    <variation>A</variation>
    <location>
        <position position="143"/>
    </location>
</feature>
<feature type="mutagenesis site" description="Reduced arginine ADP-riboxanase activity." evidence="8">
    <original>TYKN</original>
    <variation>AYKA</variation>
    <location>
        <begin position="169"/>
        <end position="172"/>
    </location>
</feature>
<feature type="mutagenesis site" description="Abolished deamination step without affecting the arginine ADP-ribosylation step." evidence="5 8">
    <original>D</original>
    <variation>A</variation>
    <location>
        <position position="177"/>
    </location>
</feature>
<feature type="mutagenesis site" description="Abolished arginine ADP-riboxanation of host CASP4/CASP11." evidence="5">
    <original>F</original>
    <variation>A</variation>
    <location>
        <position position="186"/>
    </location>
</feature>
<feature type="mutagenesis site" description="Abolished arginine ADP-riboxanase activity; when associated with A-211." evidence="8">
    <original>F</original>
    <variation>A</variation>
    <location>
        <position position="188"/>
    </location>
</feature>
<feature type="mutagenesis site" description="In EH/AA mutant; abolished arginine ADP-riboxanation of host CASP4/CASP11; when associated with A-328." evidence="5">
    <original>E</original>
    <variation>A</variation>
    <location>
        <position position="192"/>
    </location>
</feature>
<feature type="mutagenesis site" description="Abolished arginine ADP-riboxanase activity; when associated with A-188." evidence="8">
    <original>F</original>
    <variation>A</variation>
    <location>
        <position position="211"/>
    </location>
</feature>
<feature type="mutagenesis site" description="Abolished arginine ADP-riboxanase activity." evidence="8">
    <original>D</original>
    <variation>A</variation>
    <location>
        <position position="231"/>
    </location>
</feature>
<feature type="mutagenesis site" description="Abolished interaction with host calmodulin; when associated with A-117, A-131 and A-135." evidence="8">
    <original>L</original>
    <variation>A</variation>
    <location>
        <position position="283"/>
    </location>
</feature>
<feature type="mutagenesis site" description="Abolished arginine ADP-riboxanase activity without affecting ability to inhibit host calmodulin." evidence="7">
    <original>EYH</original>
    <variation>AYA</variation>
    <location>
        <begin position="326"/>
        <end position="328"/>
    </location>
</feature>
<feature type="mutagenesis site" description="Abolished arginine ADP-riboxanation of host CASP4/CASP11." evidence="5 8">
    <original>E</original>
    <variation>A</variation>
    <location>
        <position position="326"/>
    </location>
</feature>
<feature type="mutagenesis site" description="In EH/AA mutant; abolished arginine ADP-riboxanation of host CASP4/CASP11; when associated with A-192." evidence="5">
    <original>H</original>
    <variation>A</variation>
    <location>
        <position position="328"/>
    </location>
</feature>
<feature type="mutagenesis site" description="Abolished interaction with host calmodulin; when associated with A-96." evidence="8">
    <original>R</original>
    <variation>A</variation>
    <location>
        <position position="331"/>
    </location>
</feature>
<feature type="mutagenesis site" description="Abolished interaction with host CASP4/CASP11 and ability to prevent host pyroptosis; when associated with 456-A--A-459 and A-471." evidence="3">
    <original>LSTDN</original>
    <variation>AAAAA</variation>
    <location>
        <begin position="333"/>
        <end position="337"/>
    </location>
</feature>
<feature type="mutagenesis site" description="Strongly reduced interaction with host CASP4/CASP11 and subsequent ADP-riboxanation of CASP4/CASP11; when associated with A-410." evidence="8">
    <original>E</original>
    <variation>A</variation>
    <location>
        <position position="349"/>
    </location>
</feature>
<feature type="mutagenesis site" description="Strongly reduced interaction with host CASP4/CASP11 and subsequent ADP-riboxanation of CASP4/CASP11; when associated with A-349." evidence="8">
    <original>R</original>
    <variation>A</variation>
    <location>
        <position position="410"/>
    </location>
</feature>
<feature type="mutagenesis site" description="Strongly reduced interaction with host CASP4/CASP11; when associated with D-449. Abolished ADP-riboxanation of CASP4/CASP11; when associated with D-449." evidence="8">
    <original>L</original>
    <variation>D</variation>
    <location>
        <position position="414"/>
    </location>
</feature>
<feature type="mutagenesis site" description="Strongly reduced interaction with host CASP4/CASP11; when associated with D-414. Abolished ADP-riboxanation of CASP4/CASP11; when associated with D-414." evidence="8">
    <original>V</original>
    <variation>D</variation>
    <location>
        <position position="449"/>
    </location>
</feature>
<feature type="mutagenesis site" description="Strongly reduced interaction with host CASP4/CASP11 and subsequent ADP-riboxanation of CASP4/CASP11; when associated with A-461." evidence="8">
    <original>N</original>
    <variation>D</variation>
    <location>
        <position position="450"/>
    </location>
</feature>
<feature type="mutagenesis site" description="In delta-Ank; impaired interaction with host CASP4/CASP11; when associated with A-471. Abolished interaction with host CASP4/CASP11 and ability to prevent host pyroptosis; when associated with 333-A--A-337 and A-471." evidence="3">
    <original>LDNA</original>
    <variation>ADNG</variation>
    <location>
        <begin position="456"/>
        <end position="459"/>
    </location>
</feature>
<feature type="mutagenesis site" description="Strongly reduced interaction with host CASP4/CASP11; when associated with D-450 and subsequent ADP-riboxanation of CASP4/CASP11." evidence="8">
    <original>K</original>
    <variation>A</variation>
    <location>
        <position position="461"/>
    </location>
</feature>
<feature type="mutagenesis site" description="In delta-Ank; impaired interaction with host CASP4/CASP11; when associated with 456-A--A-459. Abolished interaction with host CASP4/CASP11 and ability to prevent host pyroptosis; when associated with 333-A--A-337 and 456-A--A-459." evidence="3">
    <original>L</original>
    <variation>A</variation>
    <location>
        <position position="471"/>
    </location>
</feature>
<feature type="sequence conflict" description="In Ref. 1; BAN28452." evidence="11" ref="1">
    <original>I</original>
    <variation>T</variation>
    <location>
        <position position="23"/>
    </location>
</feature>
<feature type="sequence conflict" description="In Ref. 1; BAN28452." evidence="11" ref="1">
    <original>D</original>
    <variation>A</variation>
    <location>
        <position position="28"/>
    </location>
</feature>
<feature type="sequence conflict" description="In Ref. 1; BAN28452." evidence="11" ref="1">
    <original>ISC</original>
    <variation>VLR</variation>
    <location>
        <begin position="36"/>
        <end position="38"/>
    </location>
</feature>
<feature type="sequence conflict" description="In Ref. 1; BAN28452." evidence="11" ref="1">
    <original>DTVKS</original>
    <variation>NTVKN</variation>
    <location>
        <begin position="57"/>
        <end position="61"/>
    </location>
</feature>
<feature type="sequence conflict" description="In Ref. 1; BAN28452." evidence="11" ref="1">
    <original>I</original>
    <variation>L</variation>
    <location>
        <position position="89"/>
    </location>
</feature>
<feature type="sequence conflict" description="In Ref. 1; BAN28452." evidence="11" ref="1">
    <original>L</original>
    <variation>I</variation>
    <location>
        <position position="113"/>
    </location>
</feature>
<feature type="sequence conflict" description="In Ref. 1; BAN28452." evidence="11" ref="1">
    <original>T</original>
    <variation>V</variation>
    <location>
        <position position="120"/>
    </location>
</feature>
<feature type="sequence conflict" description="In Ref. 1; BAN28452." evidence="11" ref="1">
    <original>D</original>
    <variation>N</variation>
    <location>
        <position position="138"/>
    </location>
</feature>
<feature type="sequence conflict" description="In Ref. 1; BAN28452." evidence="11" ref="1">
    <original>A</original>
    <variation>S</variation>
    <location>
        <position position="147"/>
    </location>
</feature>
<feature type="sequence conflict" description="In Ref. 1; BAN28452." evidence="11" ref="1">
    <original>T</original>
    <variation>I</variation>
    <location>
        <position position="153"/>
    </location>
</feature>
<feature type="sequence conflict" description="In Ref. 1; BAN28452." evidence="11" ref="1">
    <original>K</original>
    <variation>Q</variation>
    <location>
        <position position="163"/>
    </location>
</feature>
<feature type="sequence conflict" description="In Ref. 1; BAN28452." evidence="11" ref="1">
    <original>YKNTFSEDIEEIA</original>
    <variation>HKNTYSEDIKEIS</variation>
    <location>
        <begin position="170"/>
        <end position="182"/>
    </location>
</feature>
<feature type="sequence conflict" description="In Ref. 1; BAN28452." evidence="11" ref="1">
    <original>T</original>
    <variation>K</variation>
    <location>
        <position position="199"/>
    </location>
</feature>
<feature type="sequence conflict" description="In Ref. 1; BAN28452." evidence="11" ref="1">
    <original>R</original>
    <variation>G</variation>
    <location>
        <position position="300"/>
    </location>
</feature>
<feature type="helix" evidence="23">
    <location>
        <begin position="52"/>
        <end position="78"/>
    </location>
</feature>
<feature type="helix" evidence="23">
    <location>
        <begin position="80"/>
        <end position="84"/>
    </location>
</feature>
<feature type="strand" evidence="23">
    <location>
        <begin position="93"/>
        <end position="96"/>
    </location>
</feature>
<feature type="helix" evidence="23">
    <location>
        <begin position="100"/>
        <end position="120"/>
    </location>
</feature>
<feature type="helix" evidence="23">
    <location>
        <begin position="125"/>
        <end position="135"/>
    </location>
</feature>
<feature type="strand" evidence="23">
    <location>
        <begin position="139"/>
        <end position="147"/>
    </location>
</feature>
<feature type="strand" evidence="23">
    <location>
        <begin position="150"/>
        <end position="157"/>
    </location>
</feature>
<feature type="helix" evidence="23">
    <location>
        <begin position="159"/>
        <end position="164"/>
    </location>
</feature>
<feature type="helix" evidence="23">
    <location>
        <begin position="176"/>
        <end position="181"/>
    </location>
</feature>
<feature type="strand" evidence="23">
    <location>
        <begin position="186"/>
        <end position="193"/>
    </location>
</feature>
<feature type="strand" evidence="25">
    <location>
        <begin position="206"/>
        <end position="208"/>
    </location>
</feature>
<feature type="strand" evidence="23">
    <location>
        <begin position="213"/>
        <end position="218"/>
    </location>
</feature>
<feature type="strand" evidence="23">
    <location>
        <begin position="226"/>
        <end position="230"/>
    </location>
</feature>
<feature type="helix" evidence="23">
    <location>
        <begin position="240"/>
        <end position="242"/>
    </location>
</feature>
<feature type="helix" evidence="23">
    <location>
        <begin position="246"/>
        <end position="252"/>
    </location>
</feature>
<feature type="helix" evidence="23">
    <location>
        <begin position="255"/>
        <end position="258"/>
    </location>
</feature>
<feature type="strand" evidence="25">
    <location>
        <begin position="275"/>
        <end position="277"/>
    </location>
</feature>
<feature type="turn" evidence="23">
    <location>
        <begin position="278"/>
        <end position="280"/>
    </location>
</feature>
<feature type="helix" evidence="23">
    <location>
        <begin position="281"/>
        <end position="294"/>
    </location>
</feature>
<feature type="helix" evidence="23">
    <location>
        <begin position="299"/>
        <end position="305"/>
    </location>
</feature>
<feature type="helix" evidence="23">
    <location>
        <begin position="312"/>
        <end position="322"/>
    </location>
</feature>
<feature type="strand" evidence="23">
    <location>
        <begin position="326"/>
        <end position="336"/>
    </location>
</feature>
<feature type="strand" evidence="23">
    <location>
        <begin position="339"/>
        <end position="342"/>
    </location>
</feature>
<feature type="helix" evidence="22">
    <location>
        <begin position="348"/>
        <end position="353"/>
    </location>
</feature>
<feature type="helix" evidence="22">
    <location>
        <begin position="357"/>
        <end position="363"/>
    </location>
</feature>
<feature type="helix" evidence="22">
    <location>
        <begin position="367"/>
        <end position="379"/>
    </location>
</feature>
<feature type="helix" evidence="22">
    <location>
        <begin position="383"/>
        <end position="392"/>
    </location>
</feature>
<feature type="helix" evidence="22">
    <location>
        <begin position="397"/>
        <end position="403"/>
    </location>
</feature>
<feature type="strand" evidence="24">
    <location>
        <begin position="407"/>
        <end position="409"/>
    </location>
</feature>
<feature type="helix" evidence="22">
    <location>
        <begin position="410"/>
        <end position="414"/>
    </location>
</feature>
<feature type="helix" evidence="22">
    <location>
        <begin position="417"/>
        <end position="422"/>
    </location>
</feature>
<feature type="helix" evidence="22">
    <location>
        <begin position="425"/>
        <end position="427"/>
    </location>
</feature>
<feature type="helix" evidence="22">
    <location>
        <begin position="428"/>
        <end position="436"/>
    </location>
</feature>
<feature type="strand" evidence="22">
    <location>
        <begin position="447"/>
        <end position="450"/>
    </location>
</feature>
<feature type="helix" evidence="22">
    <location>
        <begin position="455"/>
        <end position="462"/>
    </location>
</feature>
<feature type="helix" evidence="22">
    <location>
        <begin position="465"/>
        <end position="473"/>
    </location>
</feature>
<organism>
    <name type="scientific">Shigella flexneri</name>
    <dbReference type="NCBI Taxonomy" id="623"/>
    <lineage>
        <taxon>Bacteria</taxon>
        <taxon>Pseudomonadati</taxon>
        <taxon>Pseudomonadota</taxon>
        <taxon>Gammaproteobacteria</taxon>
        <taxon>Enterobacterales</taxon>
        <taxon>Enterobacteriaceae</taxon>
        <taxon>Shigella</taxon>
    </lineage>
</organism>
<proteinExistence type="evidence at protein level"/>